<evidence type="ECO:0000255" key="1">
    <source>
        <dbReference type="HAMAP-Rule" id="MF_00658"/>
    </source>
</evidence>
<proteinExistence type="inferred from homology"/>
<organism>
    <name type="scientific">Bifidobacterium animalis subsp. lactis (strain AD011)</name>
    <dbReference type="NCBI Taxonomy" id="442563"/>
    <lineage>
        <taxon>Bacteria</taxon>
        <taxon>Bacillati</taxon>
        <taxon>Actinomycetota</taxon>
        <taxon>Actinomycetes</taxon>
        <taxon>Bifidobacteriales</taxon>
        <taxon>Bifidobacteriaceae</taxon>
        <taxon>Bifidobacterium</taxon>
    </lineage>
</organism>
<comment type="function">
    <text evidence="1">Specifically methylates the pseudouridine at position 1915 (m3Psi1915) in 23S rRNA.</text>
</comment>
<comment type="catalytic activity">
    <reaction evidence="1">
        <text>pseudouridine(1915) in 23S rRNA + S-adenosyl-L-methionine = N(3)-methylpseudouridine(1915) in 23S rRNA + S-adenosyl-L-homocysteine + H(+)</text>
        <dbReference type="Rhea" id="RHEA:42752"/>
        <dbReference type="Rhea" id="RHEA-COMP:10221"/>
        <dbReference type="Rhea" id="RHEA-COMP:10222"/>
        <dbReference type="ChEBI" id="CHEBI:15378"/>
        <dbReference type="ChEBI" id="CHEBI:57856"/>
        <dbReference type="ChEBI" id="CHEBI:59789"/>
        <dbReference type="ChEBI" id="CHEBI:65314"/>
        <dbReference type="ChEBI" id="CHEBI:74486"/>
        <dbReference type="EC" id="2.1.1.177"/>
    </reaction>
</comment>
<comment type="subunit">
    <text evidence="1">Homodimer.</text>
</comment>
<comment type="subcellular location">
    <subcellularLocation>
        <location evidence="1">Cytoplasm</location>
    </subcellularLocation>
</comment>
<comment type="similarity">
    <text evidence="1">Belongs to the RNA methyltransferase RlmH family.</text>
</comment>
<dbReference type="EC" id="2.1.1.177" evidence="1"/>
<dbReference type="EMBL" id="CP001213">
    <property type="protein sequence ID" value="ACL29360.1"/>
    <property type="molecule type" value="Genomic_DNA"/>
</dbReference>
<dbReference type="RefSeq" id="WP_004218768.1">
    <property type="nucleotide sequence ID" value="NC_011835.1"/>
</dbReference>
<dbReference type="SMR" id="B8DTN1"/>
<dbReference type="STRING" id="442563.BLA_1072"/>
<dbReference type="GeneID" id="29695683"/>
<dbReference type="KEGG" id="bla:BLA_1072"/>
<dbReference type="HOGENOM" id="CLU_100552_0_0_11"/>
<dbReference type="Proteomes" id="UP000002456">
    <property type="component" value="Chromosome"/>
</dbReference>
<dbReference type="GO" id="GO:0005737">
    <property type="term" value="C:cytoplasm"/>
    <property type="evidence" value="ECO:0007669"/>
    <property type="project" value="UniProtKB-SubCell"/>
</dbReference>
<dbReference type="GO" id="GO:0070038">
    <property type="term" value="F:rRNA (pseudouridine-N3-)-methyltransferase activity"/>
    <property type="evidence" value="ECO:0007669"/>
    <property type="project" value="UniProtKB-UniRule"/>
</dbReference>
<dbReference type="CDD" id="cd18081">
    <property type="entry name" value="RlmH-like"/>
    <property type="match status" value="1"/>
</dbReference>
<dbReference type="Gene3D" id="3.40.1280.10">
    <property type="match status" value="1"/>
</dbReference>
<dbReference type="HAMAP" id="MF_00658">
    <property type="entry name" value="23SrRNA_methyltr_H"/>
    <property type="match status" value="1"/>
</dbReference>
<dbReference type="InterPro" id="IPR029028">
    <property type="entry name" value="Alpha/beta_knot_MTases"/>
</dbReference>
<dbReference type="InterPro" id="IPR003742">
    <property type="entry name" value="RlmH-like"/>
</dbReference>
<dbReference type="InterPro" id="IPR029026">
    <property type="entry name" value="tRNA_m1G_MTases_N"/>
</dbReference>
<dbReference type="NCBIfam" id="NF000985">
    <property type="entry name" value="PRK00103.1-3"/>
    <property type="match status" value="1"/>
</dbReference>
<dbReference type="NCBIfam" id="TIGR00246">
    <property type="entry name" value="tRNA_RlmH_YbeA"/>
    <property type="match status" value="1"/>
</dbReference>
<dbReference type="PANTHER" id="PTHR33603">
    <property type="entry name" value="METHYLTRANSFERASE"/>
    <property type="match status" value="1"/>
</dbReference>
<dbReference type="PANTHER" id="PTHR33603:SF1">
    <property type="entry name" value="RIBOSOMAL RNA LARGE SUBUNIT METHYLTRANSFERASE H"/>
    <property type="match status" value="1"/>
</dbReference>
<dbReference type="Pfam" id="PF02590">
    <property type="entry name" value="SPOUT_MTase"/>
    <property type="match status" value="1"/>
</dbReference>
<dbReference type="PIRSF" id="PIRSF004505">
    <property type="entry name" value="MT_bac"/>
    <property type="match status" value="1"/>
</dbReference>
<dbReference type="SUPFAM" id="SSF75217">
    <property type="entry name" value="alpha/beta knot"/>
    <property type="match status" value="1"/>
</dbReference>
<protein>
    <recommendedName>
        <fullName evidence="1">Ribosomal RNA large subunit methyltransferase H</fullName>
        <ecNumber evidence="1">2.1.1.177</ecNumber>
    </recommendedName>
    <alternativeName>
        <fullName evidence="1">23S rRNA (pseudouridine1915-N3)-methyltransferase</fullName>
    </alternativeName>
    <alternativeName>
        <fullName evidence="1">23S rRNA m3Psi1915 methyltransferase</fullName>
    </alternativeName>
    <alternativeName>
        <fullName evidence="1">rRNA (pseudouridine-N3-)-methyltransferase RlmH</fullName>
    </alternativeName>
</protein>
<sequence>MNIDIVCVGKVKERYLRDAIDEYRKRLSRFAKVDVIEVADEKTPEHASDTLNAQIKEKEGERILKHLRDGAFVVALAIEGDQLTSEQLAARIAQWGLHGVSHLQFVIGGSLGLDPRVLRRANMPLSFSKMTFPHQLMRVILLEQIYRAFKINAHEPYHK</sequence>
<accession>B8DTN1</accession>
<keyword id="KW-0963">Cytoplasm</keyword>
<keyword id="KW-0489">Methyltransferase</keyword>
<keyword id="KW-1185">Reference proteome</keyword>
<keyword id="KW-0698">rRNA processing</keyword>
<keyword id="KW-0949">S-adenosyl-L-methionine</keyword>
<keyword id="KW-0808">Transferase</keyword>
<gene>
    <name evidence="1" type="primary">rlmH</name>
    <name type="ordered locus">BLA_1072</name>
</gene>
<name>RLMH_BIFA0</name>
<feature type="chain" id="PRO_1000199811" description="Ribosomal RNA large subunit methyltransferase H">
    <location>
        <begin position="1"/>
        <end position="159"/>
    </location>
</feature>
<feature type="binding site" evidence="1">
    <location>
        <position position="76"/>
    </location>
    <ligand>
        <name>S-adenosyl-L-methionine</name>
        <dbReference type="ChEBI" id="CHEBI:59789"/>
    </ligand>
</feature>
<feature type="binding site" evidence="1">
    <location>
        <position position="108"/>
    </location>
    <ligand>
        <name>S-adenosyl-L-methionine</name>
        <dbReference type="ChEBI" id="CHEBI:59789"/>
    </ligand>
</feature>
<feature type="binding site" evidence="1">
    <location>
        <begin position="127"/>
        <end position="132"/>
    </location>
    <ligand>
        <name>S-adenosyl-L-methionine</name>
        <dbReference type="ChEBI" id="CHEBI:59789"/>
    </ligand>
</feature>
<reference key="1">
    <citation type="journal article" date="2009" name="J. Bacteriol.">
        <title>Genome sequence of the probiotic bacterium Bifidobacterium animalis subsp. lactis AD011.</title>
        <authorList>
            <person name="Kim J.F."/>
            <person name="Jeong H."/>
            <person name="Yu D.S."/>
            <person name="Choi S.-H."/>
            <person name="Hur C.-G."/>
            <person name="Park M.-S."/>
            <person name="Yoon S.H."/>
            <person name="Kim D.-W."/>
            <person name="Ji G.E."/>
            <person name="Park H.-S."/>
            <person name="Oh T.K."/>
        </authorList>
    </citation>
    <scope>NUCLEOTIDE SEQUENCE [LARGE SCALE GENOMIC DNA]</scope>
    <source>
        <strain>AD011</strain>
    </source>
</reference>